<protein>
    <recommendedName>
        <fullName evidence="1">Small ribosomal subunit protein uS13</fullName>
    </recommendedName>
    <alternativeName>
        <fullName evidence="3">30S ribosomal protein S13</fullName>
    </alternativeName>
</protein>
<organism>
    <name type="scientific">Methanothrix thermoacetophila (strain DSM 6194 / JCM 14653 / NBRC 101360 / PT)</name>
    <name type="common">Methanosaeta thermophila</name>
    <dbReference type="NCBI Taxonomy" id="349307"/>
    <lineage>
        <taxon>Archaea</taxon>
        <taxon>Methanobacteriati</taxon>
        <taxon>Methanobacteriota</taxon>
        <taxon>Stenosarchaea group</taxon>
        <taxon>Methanomicrobia</taxon>
        <taxon>Methanotrichales</taxon>
        <taxon>Methanotrichaceae</taxon>
        <taxon>Methanothrix</taxon>
    </lineage>
</organism>
<comment type="function">
    <text evidence="1">Located at the top of the head of the 30S subunit, it contacts several helices of the 16S rRNA. In the 70S ribosome it contacts the 23S rRNA (bridge B1a) and protein L5 of the 50S subunit (bridge B1b), connecting the 2 subunits; these bridges are implicated in subunit movement.</text>
</comment>
<comment type="subunit">
    <text evidence="1">Part of the 30S ribosomal subunit. Forms a loose heterodimer with protein S19. Forms two bridges to the 50S subunit in the 70S ribosome.</text>
</comment>
<comment type="similarity">
    <text evidence="1">Belongs to the universal ribosomal protein uS13 family.</text>
</comment>
<sequence>METKETESSVELRHIVRIYNTDLDGKKQVQMALTGIKGVGRRLARVFAVKAGVDPCATLGKLPEEQIEALKNVIESVRDNIPAWMMNRRKDIITGVDKHVMGAEVLTTLREDLDIMKKTRSYKGIRHELGLRVRGQRTRSTGRSGATVGVTRKKTQAKK</sequence>
<reference key="1">
    <citation type="submission" date="2006-10" db="EMBL/GenBank/DDBJ databases">
        <title>Complete sequence of Methanosaeta thermophila PT.</title>
        <authorList>
            <consortium name="US DOE Joint Genome Institute"/>
            <person name="Copeland A."/>
            <person name="Lucas S."/>
            <person name="Lapidus A."/>
            <person name="Barry K."/>
            <person name="Detter J.C."/>
            <person name="Glavina del Rio T."/>
            <person name="Hammon N."/>
            <person name="Israni S."/>
            <person name="Pitluck S."/>
            <person name="Chain P."/>
            <person name="Malfatti S."/>
            <person name="Shin M."/>
            <person name="Vergez L."/>
            <person name="Schmutz J."/>
            <person name="Larimer F."/>
            <person name="Land M."/>
            <person name="Hauser L."/>
            <person name="Kyrpides N."/>
            <person name="Kim E."/>
            <person name="Smith K.S."/>
            <person name="Ingram-Smith C."/>
            <person name="Richardson P."/>
        </authorList>
    </citation>
    <scope>NUCLEOTIDE SEQUENCE [LARGE SCALE GENOMIC DNA]</scope>
    <source>
        <strain>DSM 6194 / JCM 14653 / NBRC 101360 / PT</strain>
    </source>
</reference>
<dbReference type="EMBL" id="CP000477">
    <property type="protein sequence ID" value="ABK15385.1"/>
    <property type="molecule type" value="Genomic_DNA"/>
</dbReference>
<dbReference type="RefSeq" id="WP_011696763.1">
    <property type="nucleotide sequence ID" value="NC_008553.1"/>
</dbReference>
<dbReference type="SMR" id="A0B9L1"/>
<dbReference type="STRING" id="349307.Mthe_1618"/>
<dbReference type="GeneID" id="4462195"/>
<dbReference type="KEGG" id="mtp:Mthe_1618"/>
<dbReference type="HOGENOM" id="CLU_103849_0_0_2"/>
<dbReference type="OrthoDB" id="372127at2157"/>
<dbReference type="Proteomes" id="UP000000674">
    <property type="component" value="Chromosome"/>
</dbReference>
<dbReference type="GO" id="GO:0005829">
    <property type="term" value="C:cytosol"/>
    <property type="evidence" value="ECO:0007669"/>
    <property type="project" value="TreeGrafter"/>
</dbReference>
<dbReference type="GO" id="GO:0015935">
    <property type="term" value="C:small ribosomal subunit"/>
    <property type="evidence" value="ECO:0007669"/>
    <property type="project" value="TreeGrafter"/>
</dbReference>
<dbReference type="GO" id="GO:0019843">
    <property type="term" value="F:rRNA binding"/>
    <property type="evidence" value="ECO:0007669"/>
    <property type="project" value="UniProtKB-UniRule"/>
</dbReference>
<dbReference type="GO" id="GO:0003735">
    <property type="term" value="F:structural constituent of ribosome"/>
    <property type="evidence" value="ECO:0007669"/>
    <property type="project" value="InterPro"/>
</dbReference>
<dbReference type="GO" id="GO:0006412">
    <property type="term" value="P:translation"/>
    <property type="evidence" value="ECO:0007669"/>
    <property type="project" value="UniProtKB-UniRule"/>
</dbReference>
<dbReference type="FunFam" id="1.10.8.50:FF:000001">
    <property type="entry name" value="30S ribosomal protein S13"/>
    <property type="match status" value="1"/>
</dbReference>
<dbReference type="FunFam" id="4.10.910.10:FF:000002">
    <property type="entry name" value="40S ribosomal protein S18"/>
    <property type="match status" value="1"/>
</dbReference>
<dbReference type="Gene3D" id="1.10.8.50">
    <property type="match status" value="1"/>
</dbReference>
<dbReference type="Gene3D" id="4.10.910.10">
    <property type="entry name" value="30s ribosomal protein s13, domain 2"/>
    <property type="match status" value="1"/>
</dbReference>
<dbReference type="HAMAP" id="MF_01315">
    <property type="entry name" value="Ribosomal_uS13"/>
    <property type="match status" value="1"/>
</dbReference>
<dbReference type="InterPro" id="IPR027437">
    <property type="entry name" value="Rbsml_uS13_C"/>
</dbReference>
<dbReference type="InterPro" id="IPR001892">
    <property type="entry name" value="Ribosomal_uS13"/>
</dbReference>
<dbReference type="InterPro" id="IPR010979">
    <property type="entry name" value="Ribosomal_uS13-like_H2TH"/>
</dbReference>
<dbReference type="InterPro" id="IPR019977">
    <property type="entry name" value="Ribosomal_uS13_archaeal"/>
</dbReference>
<dbReference type="InterPro" id="IPR018269">
    <property type="entry name" value="Ribosomal_uS13_CS"/>
</dbReference>
<dbReference type="NCBIfam" id="NF003140">
    <property type="entry name" value="PRK04053.1"/>
    <property type="match status" value="1"/>
</dbReference>
<dbReference type="NCBIfam" id="TIGR03629">
    <property type="entry name" value="uS13_arch"/>
    <property type="match status" value="1"/>
</dbReference>
<dbReference type="PANTHER" id="PTHR10871">
    <property type="entry name" value="30S RIBOSOMAL PROTEIN S13/40S RIBOSOMAL PROTEIN S18"/>
    <property type="match status" value="1"/>
</dbReference>
<dbReference type="PANTHER" id="PTHR10871:SF3">
    <property type="entry name" value="SMALL RIBOSOMAL SUBUNIT PROTEIN US13"/>
    <property type="match status" value="1"/>
</dbReference>
<dbReference type="Pfam" id="PF00416">
    <property type="entry name" value="Ribosomal_S13"/>
    <property type="match status" value="1"/>
</dbReference>
<dbReference type="PIRSF" id="PIRSF002134">
    <property type="entry name" value="Ribosomal_S13"/>
    <property type="match status" value="1"/>
</dbReference>
<dbReference type="SUPFAM" id="SSF46946">
    <property type="entry name" value="S13-like H2TH domain"/>
    <property type="match status" value="1"/>
</dbReference>
<dbReference type="PROSITE" id="PS00646">
    <property type="entry name" value="RIBOSOMAL_S13_1"/>
    <property type="match status" value="1"/>
</dbReference>
<dbReference type="PROSITE" id="PS50159">
    <property type="entry name" value="RIBOSOMAL_S13_2"/>
    <property type="match status" value="1"/>
</dbReference>
<evidence type="ECO:0000255" key="1">
    <source>
        <dbReference type="HAMAP-Rule" id="MF_01315"/>
    </source>
</evidence>
<evidence type="ECO:0000256" key="2">
    <source>
        <dbReference type="SAM" id="MobiDB-lite"/>
    </source>
</evidence>
<evidence type="ECO:0000305" key="3"/>
<gene>
    <name evidence="1" type="primary">rps13</name>
    <name type="ordered locus">Mthe_1618</name>
</gene>
<keyword id="KW-1185">Reference proteome</keyword>
<keyword id="KW-0687">Ribonucleoprotein</keyword>
<keyword id="KW-0689">Ribosomal protein</keyword>
<keyword id="KW-0694">RNA-binding</keyword>
<keyword id="KW-0699">rRNA-binding</keyword>
<feature type="chain" id="PRO_0000306757" description="Small ribosomal subunit protein uS13">
    <location>
        <begin position="1"/>
        <end position="159"/>
    </location>
</feature>
<feature type="region of interest" description="Disordered" evidence="2">
    <location>
        <begin position="136"/>
        <end position="159"/>
    </location>
</feature>
<feature type="compositionally biased region" description="Low complexity" evidence="2">
    <location>
        <begin position="138"/>
        <end position="149"/>
    </location>
</feature>
<accession>A0B9L1</accession>
<proteinExistence type="inferred from homology"/>
<name>RS13_METTP</name>